<protein>
    <recommendedName>
        <fullName evidence="1">Pyridoxal 5'-phosphate synthase subunit PdxS</fullName>
        <shortName evidence="1">PLP synthase subunit PdxS</shortName>
        <ecNumber evidence="1">4.3.3.6</ecNumber>
    </recommendedName>
    <alternativeName>
        <fullName evidence="1">Pdx1</fullName>
    </alternativeName>
</protein>
<sequence>MDRKRYELNKELAQMLKGGVIMDVTTPEQAKIAEAAGACAVMALERIPADIRAVGGVSRMSDPKMIKGIMEAVSIPVMAKCRIGHFVEAQILEAVEIDYIDESEVLSPADDVYHIDKTRFKVPFVCGAKDLGEALRRINEGAAMIRTKGEPGTGDIVQAVRHMRMINRQISRLAGMREDELFQEAKELQVPYDLVLYVHEHKRLPVVNFAAGGVATPGDAALMMQLGAEGVFVGSGIFKSGDPEKRAQAIVKAVTNYQDPKVLAELSEDLGEAMVGINEQEIELLMAERGK</sequence>
<comment type="function">
    <text evidence="1">Catalyzes the formation of pyridoxal 5'-phosphate from ribose 5-phosphate (RBP), glyceraldehyde 3-phosphate (G3P) and ammonia. The ammonia is provided by the PdxT subunit. Can also use ribulose 5-phosphate and dihydroxyacetone phosphate as substrates, resulting from enzyme-catalyzed isomerization of RBP and G3P, respectively.</text>
</comment>
<comment type="catalytic activity">
    <reaction evidence="1">
        <text>aldehydo-D-ribose 5-phosphate + D-glyceraldehyde 3-phosphate + L-glutamine = pyridoxal 5'-phosphate + L-glutamate + phosphate + 3 H2O + H(+)</text>
        <dbReference type="Rhea" id="RHEA:31507"/>
        <dbReference type="ChEBI" id="CHEBI:15377"/>
        <dbReference type="ChEBI" id="CHEBI:15378"/>
        <dbReference type="ChEBI" id="CHEBI:29985"/>
        <dbReference type="ChEBI" id="CHEBI:43474"/>
        <dbReference type="ChEBI" id="CHEBI:58273"/>
        <dbReference type="ChEBI" id="CHEBI:58359"/>
        <dbReference type="ChEBI" id="CHEBI:59776"/>
        <dbReference type="ChEBI" id="CHEBI:597326"/>
        <dbReference type="EC" id="4.3.3.6"/>
    </reaction>
</comment>
<comment type="pathway">
    <text evidence="1">Cofactor biosynthesis; pyridoxal 5'-phosphate biosynthesis.</text>
</comment>
<comment type="subunit">
    <text evidence="1">In the presence of PdxT, forms a dodecamer of heterodimers.</text>
</comment>
<comment type="similarity">
    <text evidence="1">Belongs to the PdxS/SNZ family.</text>
</comment>
<feature type="chain" id="PRO_1000188222" description="Pyridoxal 5'-phosphate synthase subunit PdxS">
    <location>
        <begin position="1"/>
        <end position="291"/>
    </location>
</feature>
<feature type="active site" description="Schiff-base intermediate with D-ribose 5-phosphate" evidence="1">
    <location>
        <position position="80"/>
    </location>
</feature>
<feature type="binding site" evidence="1">
    <location>
        <position position="23"/>
    </location>
    <ligand>
        <name>D-ribose 5-phosphate</name>
        <dbReference type="ChEBI" id="CHEBI:78346"/>
    </ligand>
</feature>
<feature type="binding site" evidence="1">
    <location>
        <position position="152"/>
    </location>
    <ligand>
        <name>D-ribose 5-phosphate</name>
        <dbReference type="ChEBI" id="CHEBI:78346"/>
    </ligand>
</feature>
<feature type="binding site" evidence="1">
    <location>
        <position position="164"/>
    </location>
    <ligand>
        <name>D-glyceraldehyde 3-phosphate</name>
        <dbReference type="ChEBI" id="CHEBI:59776"/>
    </ligand>
</feature>
<feature type="binding site" evidence="1">
    <location>
        <position position="213"/>
    </location>
    <ligand>
        <name>D-ribose 5-phosphate</name>
        <dbReference type="ChEBI" id="CHEBI:78346"/>
    </ligand>
</feature>
<feature type="binding site" evidence="1">
    <location>
        <begin position="234"/>
        <end position="235"/>
    </location>
    <ligand>
        <name>D-ribose 5-phosphate</name>
        <dbReference type="ChEBI" id="CHEBI:78346"/>
    </ligand>
</feature>
<organism>
    <name type="scientific">Desulfitobacterium hafniense (strain DSM 10664 / DCB-2)</name>
    <dbReference type="NCBI Taxonomy" id="272564"/>
    <lineage>
        <taxon>Bacteria</taxon>
        <taxon>Bacillati</taxon>
        <taxon>Bacillota</taxon>
        <taxon>Clostridia</taxon>
        <taxon>Eubacteriales</taxon>
        <taxon>Desulfitobacteriaceae</taxon>
        <taxon>Desulfitobacterium</taxon>
    </lineage>
</organism>
<dbReference type="EC" id="4.3.3.6" evidence="1"/>
<dbReference type="EMBL" id="CP001336">
    <property type="protein sequence ID" value="ACL19137.1"/>
    <property type="molecule type" value="Genomic_DNA"/>
</dbReference>
<dbReference type="RefSeq" id="WP_005813582.1">
    <property type="nucleotide sequence ID" value="NC_011830.1"/>
</dbReference>
<dbReference type="SMR" id="B8FZR3"/>
<dbReference type="KEGG" id="dhd:Dhaf_1077"/>
<dbReference type="HOGENOM" id="CLU_055352_1_0_9"/>
<dbReference type="UniPathway" id="UPA00245"/>
<dbReference type="Proteomes" id="UP000007726">
    <property type="component" value="Chromosome"/>
</dbReference>
<dbReference type="GO" id="GO:0036381">
    <property type="term" value="F:pyridoxal 5'-phosphate synthase (glutamine hydrolysing) activity"/>
    <property type="evidence" value="ECO:0007669"/>
    <property type="project" value="UniProtKB-UniRule"/>
</dbReference>
<dbReference type="GO" id="GO:0006520">
    <property type="term" value="P:amino acid metabolic process"/>
    <property type="evidence" value="ECO:0007669"/>
    <property type="project" value="TreeGrafter"/>
</dbReference>
<dbReference type="GO" id="GO:0042823">
    <property type="term" value="P:pyridoxal phosphate biosynthetic process"/>
    <property type="evidence" value="ECO:0007669"/>
    <property type="project" value="UniProtKB-UniRule"/>
</dbReference>
<dbReference type="GO" id="GO:0008615">
    <property type="term" value="P:pyridoxine biosynthetic process"/>
    <property type="evidence" value="ECO:0007669"/>
    <property type="project" value="TreeGrafter"/>
</dbReference>
<dbReference type="CDD" id="cd04727">
    <property type="entry name" value="pdxS"/>
    <property type="match status" value="1"/>
</dbReference>
<dbReference type="FunFam" id="3.20.20.70:FF:000001">
    <property type="entry name" value="Pyridoxine biosynthesis protein PDX1"/>
    <property type="match status" value="1"/>
</dbReference>
<dbReference type="Gene3D" id="3.20.20.70">
    <property type="entry name" value="Aldolase class I"/>
    <property type="match status" value="1"/>
</dbReference>
<dbReference type="HAMAP" id="MF_01824">
    <property type="entry name" value="PdxS"/>
    <property type="match status" value="1"/>
</dbReference>
<dbReference type="InterPro" id="IPR013785">
    <property type="entry name" value="Aldolase_TIM"/>
</dbReference>
<dbReference type="InterPro" id="IPR001852">
    <property type="entry name" value="PdxS/SNZ"/>
</dbReference>
<dbReference type="InterPro" id="IPR033755">
    <property type="entry name" value="PdxS/SNZ_N"/>
</dbReference>
<dbReference type="InterPro" id="IPR011060">
    <property type="entry name" value="RibuloseP-bd_barrel"/>
</dbReference>
<dbReference type="NCBIfam" id="NF003215">
    <property type="entry name" value="PRK04180.1"/>
    <property type="match status" value="1"/>
</dbReference>
<dbReference type="NCBIfam" id="TIGR00343">
    <property type="entry name" value="pyridoxal 5'-phosphate synthase lyase subunit PdxS"/>
    <property type="match status" value="1"/>
</dbReference>
<dbReference type="PANTHER" id="PTHR31829">
    <property type="entry name" value="PYRIDOXAL 5'-PHOSPHATE SYNTHASE SUBUNIT SNZ1-RELATED"/>
    <property type="match status" value="1"/>
</dbReference>
<dbReference type="PANTHER" id="PTHR31829:SF0">
    <property type="entry name" value="PYRIDOXAL 5'-PHOSPHATE SYNTHASE SUBUNIT SNZ1-RELATED"/>
    <property type="match status" value="1"/>
</dbReference>
<dbReference type="Pfam" id="PF01680">
    <property type="entry name" value="SOR_SNZ"/>
    <property type="match status" value="1"/>
</dbReference>
<dbReference type="PIRSF" id="PIRSF029271">
    <property type="entry name" value="Pdx1"/>
    <property type="match status" value="1"/>
</dbReference>
<dbReference type="SUPFAM" id="SSF51366">
    <property type="entry name" value="Ribulose-phoshate binding barrel"/>
    <property type="match status" value="1"/>
</dbReference>
<dbReference type="PROSITE" id="PS51129">
    <property type="entry name" value="PDXS_SNZ_2"/>
    <property type="match status" value="1"/>
</dbReference>
<accession>B8FZR3</accession>
<keyword id="KW-0456">Lyase</keyword>
<keyword id="KW-0663">Pyridoxal phosphate</keyword>
<keyword id="KW-0704">Schiff base</keyword>
<evidence type="ECO:0000255" key="1">
    <source>
        <dbReference type="HAMAP-Rule" id="MF_01824"/>
    </source>
</evidence>
<gene>
    <name evidence="1" type="primary">pdxS</name>
    <name type="ordered locus">Dhaf_1077</name>
</gene>
<name>PDXS_DESHD</name>
<proteinExistence type="inferred from homology"/>
<reference key="1">
    <citation type="journal article" date="2012" name="BMC Microbiol.">
        <title>Genome sequence of Desulfitobacterium hafniense DCB-2, a Gram-positive anaerobe capable of dehalogenation and metal reduction.</title>
        <authorList>
            <person name="Kim S.H."/>
            <person name="Harzman C."/>
            <person name="Davis J.K."/>
            <person name="Hutcheson R."/>
            <person name="Broderick J.B."/>
            <person name="Marsh T.L."/>
            <person name="Tiedje J.M."/>
        </authorList>
    </citation>
    <scope>NUCLEOTIDE SEQUENCE [LARGE SCALE GENOMIC DNA]</scope>
    <source>
        <strain>DSM 10664 / DCB-2</strain>
    </source>
</reference>